<comment type="function">
    <text evidence="1 5 6 7">Component of the NOP7 complex, which is required for maturation of the 25S and 5.8S ribosomal RNAs and formation of the 60S ribosome.</text>
</comment>
<comment type="subunit">
    <text evidence="1 2 5 7 8 9">Component of the NOP7 complex, composed of ERB1, NOP7 and YTM1. The complex is held together by ERB1, which interacts with NOP7 via its N-terminal domain and with YTM1 via a high-affinity interaction between the seven-bladed beta-propeller domains of the 2 proteins. The NOP7 complex associates with the 66S pre-ribosome (PubMed:12110181, PubMed:16287855, PubMed:26657628). Interacts (via UBL domain) with MDN1 (via VWFA/MIDAS domain) (By similarity) (PubMed:20542003, PubMed:26601951).</text>
</comment>
<comment type="interaction">
    <interactant intactId="EBI-29589">
        <id>Q12024</id>
    </interactant>
    <interactant intactId="EBI-28098">
        <id>Q04660</id>
        <label>ERB1</label>
    </interactant>
    <organismsDiffer>false</organismsDiffer>
    <experiments>13</experiments>
</comment>
<comment type="subcellular location">
    <subcellularLocation>
        <location evidence="3">Nucleus</location>
        <location evidence="3">Nucleolus</location>
    </subcellularLocation>
    <subcellularLocation>
        <location evidence="11">Nucleus</location>
        <location evidence="11">Nucleoplasm</location>
    </subcellularLocation>
</comment>
<comment type="miscellaneous">
    <text evidence="4">Present with 6670 molecules/cell in log phase SD medium.</text>
</comment>
<comment type="similarity">
    <text evidence="1">Belongs to the WD repeat WDR12/YTM1 family.</text>
</comment>
<organism>
    <name type="scientific">Saccharomyces cerevisiae (strain ATCC 204508 / S288c)</name>
    <name type="common">Baker's yeast</name>
    <dbReference type="NCBI Taxonomy" id="559292"/>
    <lineage>
        <taxon>Eukaryota</taxon>
        <taxon>Fungi</taxon>
        <taxon>Dikarya</taxon>
        <taxon>Ascomycota</taxon>
        <taxon>Saccharomycotina</taxon>
        <taxon>Saccharomycetes</taxon>
        <taxon>Saccharomycetales</taxon>
        <taxon>Saccharomycetaceae</taxon>
        <taxon>Saccharomyces</taxon>
    </lineage>
</organism>
<gene>
    <name evidence="1 10" type="primary">YTM1</name>
    <name evidence="13" type="ordered locus">YOR272W</name>
</gene>
<reference key="1">
    <citation type="submission" date="1997-04" db="EMBL/GenBank/DDBJ databases">
        <title>YTM1, a suppressor of beta-tubulin mutation, encodes a novel microtubule-interacting protein and is essential for G1/S transition in Saccharomyces cerevisiae.</title>
        <authorList>
            <person name="Matsumoto S."/>
            <person name="Yahara I."/>
        </authorList>
    </citation>
    <scope>NUCLEOTIDE SEQUENCE [GENOMIC DNA]</scope>
    <source>
        <strain>SM201</strain>
    </source>
</reference>
<reference key="2">
    <citation type="journal article" date="1996" name="Yeast">
        <title>DNA sequence analysis of the VPH1-SNF2 region on chromosome XV of Saccharomyces cerevisiae.</title>
        <authorList>
            <person name="Cheret G."/>
            <person name="Bernardi A."/>
            <person name="Sor F.J."/>
        </authorList>
    </citation>
    <scope>NUCLEOTIDE SEQUENCE [GENOMIC DNA]</scope>
    <source>
        <strain>ATCC 204508 / S288c</strain>
    </source>
</reference>
<reference key="3">
    <citation type="journal article" date="1997" name="Nature">
        <title>The nucleotide sequence of Saccharomyces cerevisiae chromosome XV.</title>
        <authorList>
            <person name="Dujon B."/>
            <person name="Albermann K."/>
            <person name="Aldea M."/>
            <person name="Alexandraki D."/>
            <person name="Ansorge W."/>
            <person name="Arino J."/>
            <person name="Benes V."/>
            <person name="Bohn C."/>
            <person name="Bolotin-Fukuhara M."/>
            <person name="Bordonne R."/>
            <person name="Boyer J."/>
            <person name="Camasses A."/>
            <person name="Casamayor A."/>
            <person name="Casas C."/>
            <person name="Cheret G."/>
            <person name="Cziepluch C."/>
            <person name="Daignan-Fornier B."/>
            <person name="Dang V.-D."/>
            <person name="de Haan M."/>
            <person name="Delius H."/>
            <person name="Durand P."/>
            <person name="Fairhead C."/>
            <person name="Feldmann H."/>
            <person name="Gaillon L."/>
            <person name="Galisson F."/>
            <person name="Gamo F.-J."/>
            <person name="Gancedo C."/>
            <person name="Goffeau A."/>
            <person name="Goulding S.E."/>
            <person name="Grivell L.A."/>
            <person name="Habbig B."/>
            <person name="Hand N.J."/>
            <person name="Hani J."/>
            <person name="Hattenhorst U."/>
            <person name="Hebling U."/>
            <person name="Hernando Y."/>
            <person name="Herrero E."/>
            <person name="Heumann K."/>
            <person name="Hiesel R."/>
            <person name="Hilger F."/>
            <person name="Hofmann B."/>
            <person name="Hollenberg C.P."/>
            <person name="Hughes B."/>
            <person name="Jauniaux J.-C."/>
            <person name="Kalogeropoulos A."/>
            <person name="Katsoulou C."/>
            <person name="Kordes E."/>
            <person name="Lafuente M.J."/>
            <person name="Landt O."/>
            <person name="Louis E.J."/>
            <person name="Maarse A.C."/>
            <person name="Madania A."/>
            <person name="Mannhaupt G."/>
            <person name="Marck C."/>
            <person name="Martin R.P."/>
            <person name="Mewes H.-W."/>
            <person name="Michaux G."/>
            <person name="Paces V."/>
            <person name="Parle-McDermott A.G."/>
            <person name="Pearson B.M."/>
            <person name="Perrin A."/>
            <person name="Pettersson B."/>
            <person name="Poch O."/>
            <person name="Pohl T.M."/>
            <person name="Poirey R."/>
            <person name="Portetelle D."/>
            <person name="Pujol A."/>
            <person name="Purnelle B."/>
            <person name="Ramezani Rad M."/>
            <person name="Rechmann S."/>
            <person name="Schwager C."/>
            <person name="Schweizer M."/>
            <person name="Sor F."/>
            <person name="Sterky F."/>
            <person name="Tarassov I.A."/>
            <person name="Teodoru C."/>
            <person name="Tettelin H."/>
            <person name="Thierry A."/>
            <person name="Tobiasch E."/>
            <person name="Tzermia M."/>
            <person name="Uhlen M."/>
            <person name="Unseld M."/>
            <person name="Valens M."/>
            <person name="Vandenbol M."/>
            <person name="Vetter I."/>
            <person name="Vlcek C."/>
            <person name="Voet M."/>
            <person name="Volckaert G."/>
            <person name="Voss H."/>
            <person name="Wambutt R."/>
            <person name="Wedler H."/>
            <person name="Wiemann S."/>
            <person name="Winsor B."/>
            <person name="Wolfe K.H."/>
            <person name="Zollner A."/>
            <person name="Zumstein E."/>
            <person name="Kleine K."/>
        </authorList>
    </citation>
    <scope>NUCLEOTIDE SEQUENCE [LARGE SCALE GENOMIC DNA]</scope>
    <source>
        <strain>ATCC 204508 / S288c</strain>
    </source>
</reference>
<reference key="4">
    <citation type="journal article" date="2014" name="G3 (Bethesda)">
        <title>The reference genome sequence of Saccharomyces cerevisiae: Then and now.</title>
        <authorList>
            <person name="Engel S.R."/>
            <person name="Dietrich F.S."/>
            <person name="Fisk D.G."/>
            <person name="Binkley G."/>
            <person name="Balakrishnan R."/>
            <person name="Costanzo M.C."/>
            <person name="Dwight S.S."/>
            <person name="Hitz B.C."/>
            <person name="Karra K."/>
            <person name="Nash R.S."/>
            <person name="Weng S."/>
            <person name="Wong E.D."/>
            <person name="Lloyd P."/>
            <person name="Skrzypek M.S."/>
            <person name="Miyasato S.R."/>
            <person name="Simison M."/>
            <person name="Cherry J.M."/>
        </authorList>
    </citation>
    <scope>GENOME REANNOTATION</scope>
    <source>
        <strain>ATCC 204508 / S288c</strain>
    </source>
</reference>
<reference key="5">
    <citation type="journal article" date="2002" name="Cell">
        <title>Yph1p, an ORC-interacting protein: potential links between cell proliferation control, DNA replication, and ribosome biogenesis.</title>
        <authorList>
            <person name="Du Y.-C.N."/>
            <person name="Stillman B."/>
        </authorList>
    </citation>
    <scope>IDENTIFICATION BY MASS SPECTROMETRY</scope>
    <scope>IDENTIFICATION IN THE NOP7 COMPLEX WITH ERB1 AND NOP7</scope>
</reference>
<reference key="6">
    <citation type="journal article" date="2003" name="Nature">
        <title>Global analysis of protein localization in budding yeast.</title>
        <authorList>
            <person name="Huh W.-K."/>
            <person name="Falvo J.V."/>
            <person name="Gerke L.C."/>
            <person name="Carroll A.S."/>
            <person name="Howson R.W."/>
            <person name="Weissman J.S."/>
            <person name="O'Shea E.K."/>
        </authorList>
    </citation>
    <scope>SUBCELLULAR LOCATION [LARGE SCALE ANALYSIS]</scope>
</reference>
<reference key="7">
    <citation type="journal article" date="2003" name="Nature">
        <title>Global analysis of protein expression in yeast.</title>
        <authorList>
            <person name="Ghaemmaghami S."/>
            <person name="Huh W.-K."/>
            <person name="Bower K."/>
            <person name="Howson R.W."/>
            <person name="Belle A."/>
            <person name="Dephoure N."/>
            <person name="O'Shea E.K."/>
            <person name="Weissman J.S."/>
        </authorList>
    </citation>
    <scope>LEVEL OF PROTEIN EXPRESSION [LARGE SCALE ANALYSIS]</scope>
</reference>
<reference key="8">
    <citation type="journal article" date="2005" name="Mol. Cell. Biol.">
        <title>Ytm1, Nop7, and Erb1 form a complex necessary for maturation of yeast 66S preribosomes.</title>
        <authorList>
            <person name="Miles T.D."/>
            <person name="Jakovljevic J."/>
            <person name="Horsey E.W."/>
            <person name="Harnpicharnchai P."/>
            <person name="Tang L."/>
            <person name="Woolford J.L. Jr."/>
        </authorList>
    </citation>
    <scope>FUNCTION</scope>
    <scope>IDENTIFICATION IN THE NOP7 COMPLEX WITH ERB1 AND NOP7</scope>
    <scope>ASSOCIATION OF THE NOP7 COMPLEX WITH THE 66S PRE-RIBOSOME</scope>
    <scope>MUTAGENESIS OF GLY-398 AND SER-442</scope>
</reference>
<reference key="9">
    <citation type="journal article" date="2008" name="Mol. Biol. Cell">
        <title>Interactions among Ytm1, Erb1, and Nop7 required for assembly of the Nop7-subcomplex in yeast preribosomes.</title>
        <authorList>
            <person name="Tang L."/>
            <person name="Sahasranaman A."/>
            <person name="Jakovljevic J."/>
            <person name="Schleifman E."/>
            <person name="Woolford J.L. Jr."/>
        </authorList>
    </citation>
    <scope>FUNCTION</scope>
    <scope>CHARACTERIZATION OF THE NOP7 COMPLEX</scope>
    <scope>SUBCELLULAR LOCATION</scope>
</reference>
<reference key="10">
    <citation type="journal article" date="2008" name="Mol. Cell. Proteomics">
        <title>A multidimensional chromatography technology for in-depth phosphoproteome analysis.</title>
        <authorList>
            <person name="Albuquerque C.P."/>
            <person name="Smolka M.B."/>
            <person name="Payne S.H."/>
            <person name="Bafna V."/>
            <person name="Eng J."/>
            <person name="Zhou H."/>
        </authorList>
    </citation>
    <scope>IDENTIFICATION BY MASS SPECTROMETRY [LARGE SCALE ANALYSIS]</scope>
</reference>
<reference key="11">
    <citation type="journal article" date="2010" name="Mol. Cell">
        <title>The AAA-ATPase Rea1 drives removal of biogenesis factors during multiple stages of 60S ribosome assembly.</title>
        <authorList>
            <person name="Bassler J."/>
            <person name="Kallas M."/>
            <person name="Pertschy B."/>
            <person name="Ulbrich C."/>
            <person name="Thoms M."/>
            <person name="Hurt E."/>
        </authorList>
    </citation>
    <scope>FUNCTION</scope>
    <scope>SUBUNIT</scope>
    <scope>INTERACTION WITH MDN1</scope>
</reference>
<reference key="12">
    <citation type="journal article" date="2012" name="Proc. Natl. Acad. Sci. U.S.A.">
        <title>N-terminal acetylome analyses and functional insights of the N-terminal acetyltransferase NatB.</title>
        <authorList>
            <person name="Van Damme P."/>
            <person name="Lasa M."/>
            <person name="Polevoda B."/>
            <person name="Gazquez C."/>
            <person name="Elosegui-Artola A."/>
            <person name="Kim D.S."/>
            <person name="De Juan-Pardo E."/>
            <person name="Demeyer K."/>
            <person name="Hole K."/>
            <person name="Larrea E."/>
            <person name="Timmerman E."/>
            <person name="Prieto J."/>
            <person name="Arnesen T."/>
            <person name="Sherman F."/>
            <person name="Gevaert K."/>
            <person name="Aldabe R."/>
        </authorList>
    </citation>
    <scope>IDENTIFICATION BY MASS SPECTROMETRY [LARGE SCALE ANALYSIS]</scope>
</reference>
<reference key="13">
    <citation type="journal article" date="2016" name="Nucleic Acids Res.">
        <title>Concerted removal of the Erb1-Ytm1 complex in ribosome biogenesis relies on an elaborate interface.</title>
        <authorList>
            <person name="Thoms M."/>
            <person name="Ahmed Y.L."/>
            <person name="Maddi K."/>
            <person name="Hurt E."/>
            <person name="Sinning I."/>
        </authorList>
    </citation>
    <scope>INTERACTION WITH ERB1</scope>
    <scope>MUTAGENESIS OF ASP-104; TYR-123 AND HIS-310</scope>
</reference>
<reference key="14">
    <citation type="journal article" date="2016" name="J. Biol. Chem.">
        <title>The crystal structure of the ubiquitin-like domain of ribosome assembly factor Ytm1 and characterization of its interaction with the AAA-ATPase Midasin.</title>
        <authorList>
            <person name="Romes E.M."/>
            <person name="Sobhany M."/>
            <person name="Stanley R.E."/>
        </authorList>
    </citation>
    <scope>X-RAY CRYSTALLOGRAPHY (1.70 ANGSTROMS) OF 5-92</scope>
</reference>
<dbReference type="EMBL" id="U92821">
    <property type="protein sequence ID" value="AAB51396.1"/>
    <property type="molecule type" value="Genomic_DNA"/>
</dbReference>
<dbReference type="EMBL" id="X89633">
    <property type="protein sequence ID" value="CAA61778.1"/>
    <property type="molecule type" value="Genomic_DNA"/>
</dbReference>
<dbReference type="EMBL" id="Z75180">
    <property type="protein sequence ID" value="CAA99497.1"/>
    <property type="molecule type" value="Genomic_DNA"/>
</dbReference>
<dbReference type="EMBL" id="BK006948">
    <property type="protein sequence ID" value="DAA11038.1"/>
    <property type="molecule type" value="Genomic_DNA"/>
</dbReference>
<dbReference type="PIR" id="S67174">
    <property type="entry name" value="S67174"/>
</dbReference>
<dbReference type="RefSeq" id="NP_014915.3">
    <property type="nucleotide sequence ID" value="NM_001183691.3"/>
</dbReference>
<dbReference type="PDB" id="5DTC">
    <property type="method" value="X-ray"/>
    <property type="resolution" value="1.70 A"/>
    <property type="chains" value="A/B=5-92"/>
</dbReference>
<dbReference type="PDB" id="6ELZ">
    <property type="method" value="EM"/>
    <property type="resolution" value="3.30 A"/>
    <property type="chains" value="p=1-460"/>
</dbReference>
<dbReference type="PDB" id="6EM5">
    <property type="method" value="EM"/>
    <property type="resolution" value="4.30 A"/>
    <property type="chains" value="p=1-460"/>
</dbReference>
<dbReference type="PDB" id="7NAC">
    <property type="method" value="EM"/>
    <property type="resolution" value="3.04 A"/>
    <property type="chains" value="p=1-460"/>
</dbReference>
<dbReference type="PDB" id="7NAD">
    <property type="method" value="EM"/>
    <property type="resolution" value="3.04 A"/>
    <property type="chains" value="p=1-460"/>
</dbReference>
<dbReference type="PDB" id="7OHR">
    <property type="method" value="EM"/>
    <property type="resolution" value="4.72 A"/>
    <property type="chains" value="p=1-460"/>
</dbReference>
<dbReference type="PDB" id="7OHV">
    <property type="method" value="EM"/>
    <property type="resolution" value="3.90 A"/>
    <property type="chains" value="p=1-460"/>
</dbReference>
<dbReference type="PDB" id="7R72">
    <property type="method" value="EM"/>
    <property type="resolution" value="3.07 A"/>
    <property type="chains" value="p=1-460"/>
</dbReference>
<dbReference type="PDB" id="7R7A">
    <property type="method" value="EM"/>
    <property type="resolution" value="3.04 A"/>
    <property type="chains" value="p=1-460"/>
</dbReference>
<dbReference type="PDB" id="8V87">
    <property type="method" value="EM"/>
    <property type="resolution" value="2.66 A"/>
    <property type="chains" value="p=1-460"/>
</dbReference>
<dbReference type="PDBsum" id="5DTC"/>
<dbReference type="PDBsum" id="6ELZ"/>
<dbReference type="PDBsum" id="6EM5"/>
<dbReference type="PDBsum" id="7NAC"/>
<dbReference type="PDBsum" id="7NAD"/>
<dbReference type="PDBsum" id="7OHR"/>
<dbReference type="PDBsum" id="7OHV"/>
<dbReference type="PDBsum" id="7R72"/>
<dbReference type="PDBsum" id="7R7A"/>
<dbReference type="PDBsum" id="8V87"/>
<dbReference type="EMDB" id="EMD-12906"/>
<dbReference type="EMDB" id="EMD-12910"/>
<dbReference type="SMR" id="Q12024"/>
<dbReference type="BioGRID" id="34661">
    <property type="interactions" value="299"/>
</dbReference>
<dbReference type="ComplexPortal" id="CPX-1862">
    <property type="entry name" value="PeBoW complex"/>
</dbReference>
<dbReference type="DIP" id="DIP-6484N"/>
<dbReference type="FunCoup" id="Q12024">
    <property type="interactions" value="1130"/>
</dbReference>
<dbReference type="IntAct" id="Q12024">
    <property type="interactions" value="95"/>
</dbReference>
<dbReference type="MINT" id="Q12024"/>
<dbReference type="STRING" id="4932.YOR272W"/>
<dbReference type="iPTMnet" id="Q12024"/>
<dbReference type="PaxDb" id="4932-YOR272W"/>
<dbReference type="PeptideAtlas" id="Q12024"/>
<dbReference type="EnsemblFungi" id="YOR272W_mRNA">
    <property type="protein sequence ID" value="YOR272W"/>
    <property type="gene ID" value="YOR272W"/>
</dbReference>
<dbReference type="GeneID" id="854446"/>
<dbReference type="KEGG" id="sce:YOR272W"/>
<dbReference type="AGR" id="SGD:S000005798"/>
<dbReference type="SGD" id="S000005798">
    <property type="gene designation" value="YTM1"/>
</dbReference>
<dbReference type="VEuPathDB" id="FungiDB:YOR272W"/>
<dbReference type="eggNOG" id="KOG0313">
    <property type="taxonomic scope" value="Eukaryota"/>
</dbReference>
<dbReference type="GeneTree" id="ENSGT00930000150950"/>
<dbReference type="HOGENOM" id="CLU_000288_57_0_1"/>
<dbReference type="InParanoid" id="Q12024"/>
<dbReference type="OMA" id="DHKYVEF"/>
<dbReference type="OrthoDB" id="10251381at2759"/>
<dbReference type="BioCyc" id="YEAST:G3O-33762-MONOMER"/>
<dbReference type="Reactome" id="R-SCE-6791226">
    <property type="pathway name" value="Major pathway of rRNA processing in the nucleolus and cytosol"/>
</dbReference>
<dbReference type="BioGRID-ORCS" id="854446">
    <property type="hits" value="1 hit in 10 CRISPR screens"/>
</dbReference>
<dbReference type="CD-CODE" id="BDAE0F88">
    <property type="entry name" value="Nucleolus"/>
</dbReference>
<dbReference type="CD-CODE" id="E03F929F">
    <property type="entry name" value="Stress granule"/>
</dbReference>
<dbReference type="PRO" id="PR:Q12024"/>
<dbReference type="Proteomes" id="UP000002311">
    <property type="component" value="Chromosome XV"/>
</dbReference>
<dbReference type="RNAct" id="Q12024">
    <property type="molecule type" value="protein"/>
</dbReference>
<dbReference type="GO" id="GO:0005730">
    <property type="term" value="C:nucleolus"/>
    <property type="evidence" value="ECO:0000314"/>
    <property type="project" value="SGD"/>
</dbReference>
<dbReference type="GO" id="GO:0005654">
    <property type="term" value="C:nucleoplasm"/>
    <property type="evidence" value="ECO:0007669"/>
    <property type="project" value="UniProtKB-SubCell"/>
</dbReference>
<dbReference type="GO" id="GO:0005634">
    <property type="term" value="C:nucleus"/>
    <property type="evidence" value="ECO:0007005"/>
    <property type="project" value="SGD"/>
</dbReference>
<dbReference type="GO" id="GO:0070545">
    <property type="term" value="C:PeBoW complex"/>
    <property type="evidence" value="ECO:0000314"/>
    <property type="project" value="SGD"/>
</dbReference>
<dbReference type="GO" id="GO:0030687">
    <property type="term" value="C:preribosome, large subunit precursor"/>
    <property type="evidence" value="ECO:0000314"/>
    <property type="project" value="SGD"/>
</dbReference>
<dbReference type="GO" id="GO:0043021">
    <property type="term" value="F:ribonucleoprotein complex binding"/>
    <property type="evidence" value="ECO:0007669"/>
    <property type="project" value="UniProtKB-UniRule"/>
</dbReference>
<dbReference type="GO" id="GO:0051276">
    <property type="term" value="P:chromosome organization"/>
    <property type="evidence" value="ECO:0000315"/>
    <property type="project" value="SGD"/>
</dbReference>
<dbReference type="GO" id="GO:0000466">
    <property type="term" value="P:maturation of 5.8S rRNA from tricistronic rRNA transcript (SSU-rRNA, 5.8S rRNA, LSU-rRNA)"/>
    <property type="evidence" value="ECO:0007669"/>
    <property type="project" value="UniProtKB-UniRule"/>
</dbReference>
<dbReference type="GO" id="GO:0000463">
    <property type="term" value="P:maturation of LSU-rRNA from tricistronic rRNA transcript (SSU-rRNA, 5.8S rRNA, LSU-rRNA)"/>
    <property type="evidence" value="ECO:0007669"/>
    <property type="project" value="UniProtKB-UniRule"/>
</dbReference>
<dbReference type="GO" id="GO:0110136">
    <property type="term" value="P:protein-RNA complex remodeling"/>
    <property type="evidence" value="ECO:0000314"/>
    <property type="project" value="SGD"/>
</dbReference>
<dbReference type="GO" id="GO:0042273">
    <property type="term" value="P:ribosomal large subunit biogenesis"/>
    <property type="evidence" value="ECO:0000314"/>
    <property type="project" value="ComplexPortal"/>
</dbReference>
<dbReference type="GO" id="GO:0006364">
    <property type="term" value="P:rRNA processing"/>
    <property type="evidence" value="ECO:0000314"/>
    <property type="project" value="ComplexPortal"/>
</dbReference>
<dbReference type="CDD" id="cd00200">
    <property type="entry name" value="WD40"/>
    <property type="match status" value="1"/>
</dbReference>
<dbReference type="FunFam" id="2.130.10.10:FF:000706">
    <property type="entry name" value="Ribosome biogenesis protein YTM1"/>
    <property type="match status" value="1"/>
</dbReference>
<dbReference type="Gene3D" id="2.130.10.10">
    <property type="entry name" value="YVTN repeat-like/Quinoprotein amine dehydrogenase"/>
    <property type="match status" value="1"/>
</dbReference>
<dbReference type="HAMAP" id="MF_03029">
    <property type="entry name" value="WDR12"/>
    <property type="match status" value="1"/>
</dbReference>
<dbReference type="InterPro" id="IPR020472">
    <property type="entry name" value="G-protein_beta_WD-40_rep"/>
</dbReference>
<dbReference type="InterPro" id="IPR012972">
    <property type="entry name" value="NLE"/>
</dbReference>
<dbReference type="InterPro" id="IPR015943">
    <property type="entry name" value="WD40/YVTN_repeat-like_dom_sf"/>
</dbReference>
<dbReference type="InterPro" id="IPR019775">
    <property type="entry name" value="WD40_repeat_CS"/>
</dbReference>
<dbReference type="InterPro" id="IPR036322">
    <property type="entry name" value="WD40_repeat_dom_sf"/>
</dbReference>
<dbReference type="InterPro" id="IPR001680">
    <property type="entry name" value="WD40_rpt"/>
</dbReference>
<dbReference type="InterPro" id="IPR028599">
    <property type="entry name" value="WDR12/Ytm1"/>
</dbReference>
<dbReference type="PANTHER" id="PTHR19855:SF11">
    <property type="entry name" value="RIBOSOME BIOGENESIS PROTEIN WDR12"/>
    <property type="match status" value="1"/>
</dbReference>
<dbReference type="PANTHER" id="PTHR19855">
    <property type="entry name" value="WD40 REPEAT PROTEIN 12, 37"/>
    <property type="match status" value="1"/>
</dbReference>
<dbReference type="Pfam" id="PF08154">
    <property type="entry name" value="NLE"/>
    <property type="match status" value="1"/>
</dbReference>
<dbReference type="Pfam" id="PF00400">
    <property type="entry name" value="WD40"/>
    <property type="match status" value="5"/>
</dbReference>
<dbReference type="PRINTS" id="PR00320">
    <property type="entry name" value="GPROTEINBRPT"/>
</dbReference>
<dbReference type="SMART" id="SM00320">
    <property type="entry name" value="WD40"/>
    <property type="match status" value="7"/>
</dbReference>
<dbReference type="SUPFAM" id="SSF50978">
    <property type="entry name" value="WD40 repeat-like"/>
    <property type="match status" value="1"/>
</dbReference>
<dbReference type="PROSITE" id="PS00678">
    <property type="entry name" value="WD_REPEATS_1"/>
    <property type="match status" value="2"/>
</dbReference>
<dbReference type="PROSITE" id="PS50082">
    <property type="entry name" value="WD_REPEATS_2"/>
    <property type="match status" value="5"/>
</dbReference>
<dbReference type="PROSITE" id="PS50294">
    <property type="entry name" value="WD_REPEATS_REGION"/>
    <property type="match status" value="1"/>
</dbReference>
<name>YTM1_YEAST</name>
<evidence type="ECO:0000255" key="1">
    <source>
        <dbReference type="HAMAP-Rule" id="MF_03029"/>
    </source>
</evidence>
<evidence type="ECO:0000269" key="2">
    <source>
    </source>
</evidence>
<evidence type="ECO:0000269" key="3">
    <source>
    </source>
</evidence>
<evidence type="ECO:0000269" key="4">
    <source>
    </source>
</evidence>
<evidence type="ECO:0000269" key="5">
    <source>
    </source>
</evidence>
<evidence type="ECO:0000269" key="6">
    <source>
    </source>
</evidence>
<evidence type="ECO:0000269" key="7">
    <source>
    </source>
</evidence>
<evidence type="ECO:0000269" key="8">
    <source>
    </source>
</evidence>
<evidence type="ECO:0000269" key="9">
    <source>
    </source>
</evidence>
<evidence type="ECO:0000303" key="10">
    <source ref="1"/>
</evidence>
<evidence type="ECO:0000305" key="11">
    <source>
    </source>
</evidence>
<evidence type="ECO:0000305" key="12">
    <source>
    </source>
</evidence>
<evidence type="ECO:0000312" key="13">
    <source>
        <dbReference type="SGD" id="S000005798"/>
    </source>
</evidence>
<evidence type="ECO:0007829" key="14">
    <source>
        <dbReference type="PDB" id="7NAD"/>
    </source>
</evidence>
<keyword id="KW-0002">3D-structure</keyword>
<keyword id="KW-0539">Nucleus</keyword>
<keyword id="KW-1185">Reference proteome</keyword>
<keyword id="KW-0677">Repeat</keyword>
<keyword id="KW-0690">Ribosome biogenesis</keyword>
<keyword id="KW-0698">rRNA processing</keyword>
<keyword id="KW-0853">WD repeat</keyword>
<sequence length="460" mass="51359">MTEDKSQVKIRFFTREKDELLHVQDTPMYAPISLKRYGLSEIVNHLLGSEKPVPFDFLIEGELLRTSLHDYLTKKGLSSEASLNVEYTRAILPPSYLNSFSNEDWVSSLDVGDGSKHIISGSYDGIVRTWDLSGNVQKQYSGHSGPIRAVKYISNTRLVSAGNDRTLRLWKTKNDDLKLTSQQQAQEDDDDEVNIEDGKTLAILEGHKAPVVSIDVSDNSRILSASYDNSIGFWSTIYKEMTVVDPLEDINNPNNKISTAARKRRKLTMKDGTIRRRAPLSLLESHTAPVEQVIFDSTDNTVGYSVSQDHTIKTWDLVTARCIDTRTTSYSLLSIAQLSTLNLLACGSSARHITLHDPRVGASSKVTQQQLIGHKNFVSSLDTCPENEYILCSGSHDGTVKVWDVRSTSPMYTITREDKSVQKGVNDKVFAVKWAEKVGIISAGQDKKIQINKGDNIFKN</sequence>
<proteinExistence type="evidence at protein level"/>
<accession>Q12024</accession>
<accession>D6W2X2</accession>
<feature type="chain" id="PRO_0000051466" description="Ribosome biogenesis protein YTM1">
    <location>
        <begin position="1"/>
        <end position="460"/>
    </location>
</feature>
<feature type="repeat" description="WD 1" evidence="1">
    <location>
        <begin position="101"/>
        <end position="140"/>
    </location>
</feature>
<feature type="repeat" description="WD 2" evidence="1">
    <location>
        <begin position="142"/>
        <end position="180"/>
    </location>
</feature>
<feature type="repeat" description="WD 3" evidence="1">
    <location>
        <begin position="206"/>
        <end position="244"/>
    </location>
</feature>
<feature type="repeat" description="WD 4" evidence="1">
    <location>
        <begin position="285"/>
        <end position="325"/>
    </location>
</feature>
<feature type="repeat" description="WD 5" evidence="1">
    <location>
        <begin position="327"/>
        <end position="366"/>
    </location>
</feature>
<feature type="repeat" description="WD 6" evidence="1">
    <location>
        <begin position="373"/>
        <end position="413"/>
    </location>
</feature>
<feature type="repeat" description="WD 7" evidence="1">
    <location>
        <begin position="424"/>
        <end position="460"/>
    </location>
</feature>
<feature type="region of interest" description="Ubiquitin-like (UBL) domain" evidence="1 12">
    <location>
        <begin position="8"/>
        <end position="89"/>
    </location>
</feature>
<feature type="region of interest" description="Sufficient for interaction with ERB1 and association with 66S pre-ribosomes" evidence="6 9">
    <location>
        <begin position="99"/>
        <end position="460"/>
    </location>
</feature>
<feature type="mutagenesis site" description="Weakens the interaction with ERB1, leading to mostly ribosome-unbound YTM1 and defects in 60S maturation. Disrupts the interaction with YTM1 and cannot sustain growth; when associated with E-310." evidence="9">
    <original>D</original>
    <variation>R</variation>
    <location>
        <position position="104"/>
    </location>
</feature>
<feature type="mutagenesis site" description="Disrupts the interaction with YTM1 and cannot sustain growth; when associated with E-310." evidence="9">
    <original>Y</original>
    <variation>A</variation>
    <location>
        <position position="123"/>
    </location>
</feature>
<feature type="mutagenesis site" description="Disrupts the interaction with YTM1 and cannot sustain growth; when associated with R-104 or A-123." evidence="9">
    <original>H</original>
    <variation>E</variation>
    <location>
        <position position="310"/>
    </location>
</feature>
<feature type="mutagenesis site" description="In ytm1-1; abrogates binding to ERB1 and impairs 27S pre-rRNA processing and 66S pre-ribosome maturation; when associated with N-442." evidence="5">
    <original>G</original>
    <variation>D</variation>
    <location>
        <position position="398"/>
    </location>
</feature>
<feature type="mutagenesis site" description="In ytm1-1; abrogates binding to ERB1 and impairs 27S pre-rRNA processing and 66S pre-ribosome maturation; when associated with D-398." evidence="5">
    <original>S</original>
    <variation>N</variation>
    <location>
        <position position="442"/>
    </location>
</feature>
<feature type="strand" evidence="14">
    <location>
        <begin position="96"/>
        <end position="100"/>
    </location>
</feature>
<feature type="strand" evidence="14">
    <location>
        <begin position="106"/>
        <end position="110"/>
    </location>
</feature>
<feature type="strand" evidence="14">
    <location>
        <begin position="118"/>
        <end position="122"/>
    </location>
</feature>
<feature type="strand" evidence="14">
    <location>
        <begin position="127"/>
        <end position="130"/>
    </location>
</feature>
<feature type="strand" evidence="14">
    <location>
        <begin position="132"/>
        <end position="134"/>
    </location>
</feature>
<feature type="strand" evidence="14">
    <location>
        <begin position="136"/>
        <end position="140"/>
    </location>
</feature>
<feature type="strand" evidence="14">
    <location>
        <begin position="147"/>
        <end position="154"/>
    </location>
</feature>
<feature type="strand" evidence="14">
    <location>
        <begin position="157"/>
        <end position="171"/>
    </location>
</feature>
<feature type="strand" evidence="14">
    <location>
        <begin position="199"/>
        <end position="205"/>
    </location>
</feature>
<feature type="strand" evidence="14">
    <location>
        <begin position="211"/>
        <end position="216"/>
    </location>
</feature>
<feature type="strand" evidence="14">
    <location>
        <begin position="220"/>
        <end position="229"/>
    </location>
</feature>
<feature type="strand" evidence="14">
    <location>
        <begin position="231"/>
        <end position="237"/>
    </location>
</feature>
<feature type="helix" evidence="14">
    <location>
        <begin position="238"/>
        <end position="240"/>
    </location>
</feature>
<feature type="helix" evidence="14">
    <location>
        <begin position="246"/>
        <end position="251"/>
    </location>
</feature>
<feature type="helix" evidence="14">
    <location>
        <begin position="259"/>
        <end position="266"/>
    </location>
</feature>
<feature type="helix" evidence="14">
    <location>
        <begin position="267"/>
        <end position="269"/>
    </location>
</feature>
<feature type="strand" evidence="14">
    <location>
        <begin position="280"/>
        <end position="283"/>
    </location>
</feature>
<feature type="strand" evidence="14">
    <location>
        <begin position="290"/>
        <end position="293"/>
    </location>
</feature>
<feature type="turn" evidence="14">
    <location>
        <begin position="297"/>
        <end position="299"/>
    </location>
</feature>
<feature type="strand" evidence="14">
    <location>
        <begin position="300"/>
        <end position="302"/>
    </location>
</feature>
<feature type="strand" evidence="14">
    <location>
        <begin position="305"/>
        <end position="316"/>
    </location>
</feature>
<feature type="turn" evidence="14">
    <location>
        <begin position="317"/>
        <end position="320"/>
    </location>
</feature>
<feature type="strand" evidence="14">
    <location>
        <begin position="321"/>
        <end position="327"/>
    </location>
</feature>
<feature type="strand" evidence="14">
    <location>
        <begin position="332"/>
        <end position="338"/>
    </location>
</feature>
<feature type="turn" evidence="14">
    <location>
        <begin position="339"/>
        <end position="342"/>
    </location>
</feature>
<feature type="strand" evidence="14">
    <location>
        <begin position="343"/>
        <end position="348"/>
    </location>
</feature>
<feature type="strand" evidence="14">
    <location>
        <begin position="351"/>
        <end position="356"/>
    </location>
</feature>
<feature type="strand" evidence="14">
    <location>
        <begin position="370"/>
        <end position="372"/>
    </location>
</feature>
<feature type="strand" evidence="14">
    <location>
        <begin position="378"/>
        <end position="383"/>
    </location>
</feature>
<feature type="strand" evidence="14">
    <location>
        <begin position="390"/>
        <end position="395"/>
    </location>
</feature>
<feature type="strand" evidence="14">
    <location>
        <begin position="400"/>
        <end position="404"/>
    </location>
</feature>
<feature type="strand" evidence="14">
    <location>
        <begin position="407"/>
        <end position="414"/>
    </location>
</feature>
<feature type="turn" evidence="14">
    <location>
        <begin position="423"/>
        <end position="425"/>
    </location>
</feature>
<feature type="strand" evidence="14">
    <location>
        <begin position="429"/>
        <end position="435"/>
    </location>
</feature>
<feature type="turn" evidence="14">
    <location>
        <begin position="436"/>
        <end position="438"/>
    </location>
</feature>
<feature type="strand" evidence="14">
    <location>
        <begin position="439"/>
        <end position="447"/>
    </location>
</feature>
<feature type="strand" evidence="14">
    <location>
        <begin position="449"/>
        <end position="452"/>
    </location>
</feature>
<protein>
    <recommendedName>
        <fullName evidence="1">Ribosome biogenesis protein YTM1</fullName>
    </recommendedName>
    <alternativeName>
        <fullName evidence="10">Microtubule-associated protein YTM1</fullName>
    </alternativeName>
</protein>